<sequence length="185" mass="20928">MAKEWYILHTFSGREARVERAVRMLVEHARIPTNVIFDIKIPEELLTEVKDGKKRVVRRKFFPGYLLVEMDLPEVDWRIVCNEVRRIPGVSGFLGSSGNAKPQAVSADEARRILQKAGEIKGDRTPRIAQTFLVGQQVRIVEGPFATFSGEVEEVMSERNKVRVAVTIFGRATPVELELVQVEAL</sequence>
<dbReference type="EMBL" id="AE000520">
    <property type="protein sequence ID" value="AAC65224.1"/>
    <property type="molecule type" value="Genomic_DNA"/>
</dbReference>
<dbReference type="PIR" id="F71349">
    <property type="entry name" value="F71349"/>
</dbReference>
<dbReference type="RefSeq" id="WP_010881684.1">
    <property type="nucleotide sequence ID" value="NC_021490.2"/>
</dbReference>
<dbReference type="SMR" id="O83264"/>
<dbReference type="IntAct" id="O83264">
    <property type="interactions" value="6"/>
</dbReference>
<dbReference type="STRING" id="243276.TP_0236"/>
<dbReference type="EnsemblBacteria" id="AAC65224">
    <property type="protein sequence ID" value="AAC65224"/>
    <property type="gene ID" value="TP_0236"/>
</dbReference>
<dbReference type="GeneID" id="93876028"/>
<dbReference type="KEGG" id="tpa:TP_0236"/>
<dbReference type="KEGG" id="tpw:TPANIC_0236"/>
<dbReference type="eggNOG" id="COG0250">
    <property type="taxonomic scope" value="Bacteria"/>
</dbReference>
<dbReference type="HOGENOM" id="CLU_067287_1_0_12"/>
<dbReference type="OrthoDB" id="9809075at2"/>
<dbReference type="Proteomes" id="UP000000811">
    <property type="component" value="Chromosome"/>
</dbReference>
<dbReference type="GO" id="GO:0005829">
    <property type="term" value="C:cytosol"/>
    <property type="evidence" value="ECO:0007669"/>
    <property type="project" value="TreeGrafter"/>
</dbReference>
<dbReference type="GO" id="GO:0006353">
    <property type="term" value="P:DNA-templated transcription termination"/>
    <property type="evidence" value="ECO:0007669"/>
    <property type="project" value="UniProtKB-UniRule"/>
</dbReference>
<dbReference type="GO" id="GO:0032784">
    <property type="term" value="P:regulation of DNA-templated transcription elongation"/>
    <property type="evidence" value="ECO:0007669"/>
    <property type="project" value="InterPro"/>
</dbReference>
<dbReference type="GO" id="GO:0031564">
    <property type="term" value="P:transcription antitermination"/>
    <property type="evidence" value="ECO:0007669"/>
    <property type="project" value="UniProtKB-UniRule"/>
</dbReference>
<dbReference type="GO" id="GO:0140673">
    <property type="term" value="P:transcription elongation-coupled chromatin remodeling"/>
    <property type="evidence" value="ECO:0007669"/>
    <property type="project" value="InterPro"/>
</dbReference>
<dbReference type="CDD" id="cd06091">
    <property type="entry name" value="KOW_NusG"/>
    <property type="match status" value="1"/>
</dbReference>
<dbReference type="CDD" id="cd09891">
    <property type="entry name" value="NGN_Bact_1"/>
    <property type="match status" value="1"/>
</dbReference>
<dbReference type="FunFam" id="2.30.30.30:FF:000002">
    <property type="entry name" value="Transcription termination/antitermination factor NusG"/>
    <property type="match status" value="1"/>
</dbReference>
<dbReference type="Gene3D" id="2.30.30.30">
    <property type="match status" value="1"/>
</dbReference>
<dbReference type="Gene3D" id="3.30.70.940">
    <property type="entry name" value="NusG, N-terminal domain"/>
    <property type="match status" value="1"/>
</dbReference>
<dbReference type="HAMAP" id="MF_00948">
    <property type="entry name" value="NusG"/>
    <property type="match status" value="1"/>
</dbReference>
<dbReference type="InterPro" id="IPR005824">
    <property type="entry name" value="KOW"/>
</dbReference>
<dbReference type="InterPro" id="IPR047050">
    <property type="entry name" value="NGN"/>
</dbReference>
<dbReference type="InterPro" id="IPR006645">
    <property type="entry name" value="NGN-like_dom"/>
</dbReference>
<dbReference type="InterPro" id="IPR036735">
    <property type="entry name" value="NGN_dom_sf"/>
</dbReference>
<dbReference type="InterPro" id="IPR043425">
    <property type="entry name" value="NusG-like"/>
</dbReference>
<dbReference type="InterPro" id="IPR014722">
    <property type="entry name" value="Rib_uL2_dom2"/>
</dbReference>
<dbReference type="InterPro" id="IPR001062">
    <property type="entry name" value="Transcrpt_antiterm_NusG"/>
</dbReference>
<dbReference type="InterPro" id="IPR015869">
    <property type="entry name" value="Transcrpt_antiterm_NusG_bac_CS"/>
</dbReference>
<dbReference type="InterPro" id="IPR008991">
    <property type="entry name" value="Translation_prot_SH3-like_sf"/>
</dbReference>
<dbReference type="NCBIfam" id="TIGR00922">
    <property type="entry name" value="nusG"/>
    <property type="match status" value="1"/>
</dbReference>
<dbReference type="PANTHER" id="PTHR30265">
    <property type="entry name" value="RHO-INTERACTING TRANSCRIPTION TERMINATION FACTOR NUSG"/>
    <property type="match status" value="1"/>
</dbReference>
<dbReference type="PANTHER" id="PTHR30265:SF2">
    <property type="entry name" value="TRANSCRIPTION TERMINATION_ANTITERMINATION PROTEIN NUSG"/>
    <property type="match status" value="1"/>
</dbReference>
<dbReference type="Pfam" id="PF00467">
    <property type="entry name" value="KOW"/>
    <property type="match status" value="1"/>
</dbReference>
<dbReference type="Pfam" id="PF02357">
    <property type="entry name" value="NusG"/>
    <property type="match status" value="1"/>
</dbReference>
<dbReference type="PRINTS" id="PR00338">
    <property type="entry name" value="NUSGTNSCPFCT"/>
</dbReference>
<dbReference type="SMART" id="SM00739">
    <property type="entry name" value="KOW"/>
    <property type="match status" value="1"/>
</dbReference>
<dbReference type="SMART" id="SM00738">
    <property type="entry name" value="NGN"/>
    <property type="match status" value="1"/>
</dbReference>
<dbReference type="SUPFAM" id="SSF82679">
    <property type="entry name" value="N-utilization substance G protein NusG, N-terminal domain"/>
    <property type="match status" value="1"/>
</dbReference>
<dbReference type="SUPFAM" id="SSF50104">
    <property type="entry name" value="Translation proteins SH3-like domain"/>
    <property type="match status" value="1"/>
</dbReference>
<dbReference type="PROSITE" id="PS01014">
    <property type="entry name" value="NUSG"/>
    <property type="match status" value="1"/>
</dbReference>
<proteinExistence type="inferred from homology"/>
<evidence type="ECO:0000255" key="1">
    <source>
        <dbReference type="HAMAP-Rule" id="MF_00948"/>
    </source>
</evidence>
<organism>
    <name type="scientific">Treponema pallidum (strain Nichols)</name>
    <dbReference type="NCBI Taxonomy" id="243276"/>
    <lineage>
        <taxon>Bacteria</taxon>
        <taxon>Pseudomonadati</taxon>
        <taxon>Spirochaetota</taxon>
        <taxon>Spirochaetia</taxon>
        <taxon>Spirochaetales</taxon>
        <taxon>Treponemataceae</taxon>
        <taxon>Treponema</taxon>
    </lineage>
</organism>
<comment type="function">
    <text evidence="1">Participates in transcription elongation, termination and antitermination.</text>
</comment>
<comment type="similarity">
    <text evidence="1">Belongs to the NusG family.</text>
</comment>
<accession>O83264</accession>
<gene>
    <name evidence="1" type="primary">nusG</name>
    <name type="ordered locus">TP_0236</name>
</gene>
<reference key="1">
    <citation type="journal article" date="1998" name="Science">
        <title>Complete genome sequence of Treponema pallidum, the syphilis spirochete.</title>
        <authorList>
            <person name="Fraser C.M."/>
            <person name="Norris S.J."/>
            <person name="Weinstock G.M."/>
            <person name="White O."/>
            <person name="Sutton G.G."/>
            <person name="Dodson R.J."/>
            <person name="Gwinn M.L."/>
            <person name="Hickey E.K."/>
            <person name="Clayton R.A."/>
            <person name="Ketchum K.A."/>
            <person name="Sodergren E."/>
            <person name="Hardham J.M."/>
            <person name="McLeod M.P."/>
            <person name="Salzberg S.L."/>
            <person name="Peterson J.D."/>
            <person name="Khalak H.G."/>
            <person name="Richardson D.L."/>
            <person name="Howell J.K."/>
            <person name="Chidambaram M."/>
            <person name="Utterback T.R."/>
            <person name="McDonald L.A."/>
            <person name="Artiach P."/>
            <person name="Bowman C."/>
            <person name="Cotton M.D."/>
            <person name="Fujii C."/>
            <person name="Garland S.A."/>
            <person name="Hatch B."/>
            <person name="Horst K."/>
            <person name="Roberts K.M."/>
            <person name="Sandusky M."/>
            <person name="Weidman J.F."/>
            <person name="Smith H.O."/>
            <person name="Venter J.C."/>
        </authorList>
    </citation>
    <scope>NUCLEOTIDE SEQUENCE [LARGE SCALE GENOMIC DNA]</scope>
    <source>
        <strain>Nichols</strain>
    </source>
</reference>
<protein>
    <recommendedName>
        <fullName evidence="1">Transcription termination/antitermination protein NusG</fullName>
    </recommendedName>
</protein>
<name>NUSG_TREPA</name>
<keyword id="KW-1185">Reference proteome</keyword>
<keyword id="KW-0804">Transcription</keyword>
<keyword id="KW-0889">Transcription antitermination</keyword>
<keyword id="KW-0805">Transcription regulation</keyword>
<keyword id="KW-0806">Transcription termination</keyword>
<feature type="chain" id="PRO_0000113967" description="Transcription termination/antitermination protein NusG">
    <location>
        <begin position="1"/>
        <end position="185"/>
    </location>
</feature>
<feature type="domain" description="KOW" evidence="1">
    <location>
        <begin position="134"/>
        <end position="163"/>
    </location>
</feature>